<name>RPOD_RICCN</name>
<comment type="function">
    <text evidence="1">Sigma factors are initiation factors that promote the attachment of RNA polymerase to specific initiation sites and are then released. This sigma factor is the primary sigma factor during exponential growth.</text>
</comment>
<comment type="subunit">
    <text evidence="1">Interacts transiently with the RNA polymerase catalytic core.</text>
</comment>
<comment type="subcellular location">
    <subcellularLocation>
        <location evidence="1">Cytoplasm</location>
    </subcellularLocation>
</comment>
<comment type="similarity">
    <text evidence="1">Belongs to the sigma-70 factor family. RpoD/SigA subfamily.</text>
</comment>
<organism>
    <name type="scientific">Rickettsia conorii (strain ATCC VR-613 / Malish 7)</name>
    <dbReference type="NCBI Taxonomy" id="272944"/>
    <lineage>
        <taxon>Bacteria</taxon>
        <taxon>Pseudomonadati</taxon>
        <taxon>Pseudomonadota</taxon>
        <taxon>Alphaproteobacteria</taxon>
        <taxon>Rickettsiales</taxon>
        <taxon>Rickettsiaceae</taxon>
        <taxon>Rickettsieae</taxon>
        <taxon>Rickettsia</taxon>
        <taxon>spotted fever group</taxon>
    </lineage>
</organism>
<reference key="1">
    <citation type="journal article" date="2001" name="Science">
        <title>Mechanisms of evolution in Rickettsia conorii and R. prowazekii.</title>
        <authorList>
            <person name="Ogata H."/>
            <person name="Audic S."/>
            <person name="Renesto-Audiffren P."/>
            <person name="Fournier P.-E."/>
            <person name="Barbe V."/>
            <person name="Samson D."/>
            <person name="Roux V."/>
            <person name="Cossart P."/>
            <person name="Weissenbach J."/>
            <person name="Claverie J.-M."/>
            <person name="Raoult D."/>
        </authorList>
    </citation>
    <scope>NUCLEOTIDE SEQUENCE [LARGE SCALE GENOMIC DNA]</scope>
    <source>
        <strain>ATCC VR-613 / Malish 7</strain>
    </source>
</reference>
<protein>
    <recommendedName>
        <fullName evidence="1">RNA polymerase sigma factor RpoD</fullName>
    </recommendedName>
    <alternativeName>
        <fullName evidence="1">Sigma-70</fullName>
    </alternativeName>
</protein>
<dbReference type="EMBL" id="AE006914">
    <property type="protein sequence ID" value="AAL03867.1"/>
    <property type="molecule type" value="Genomic_DNA"/>
</dbReference>
<dbReference type="PIR" id="A97866">
    <property type="entry name" value="A97866"/>
</dbReference>
<dbReference type="RefSeq" id="WP_010977884.1">
    <property type="nucleotide sequence ID" value="NC_003103.1"/>
</dbReference>
<dbReference type="SMR" id="Q92FZ8"/>
<dbReference type="GeneID" id="928480"/>
<dbReference type="KEGG" id="rco:RC1329"/>
<dbReference type="PATRIC" id="fig|272944.4.peg.1523"/>
<dbReference type="HOGENOM" id="CLU_014793_7_1_5"/>
<dbReference type="Proteomes" id="UP000000816">
    <property type="component" value="Chromosome"/>
</dbReference>
<dbReference type="GO" id="GO:0005737">
    <property type="term" value="C:cytoplasm"/>
    <property type="evidence" value="ECO:0007669"/>
    <property type="project" value="UniProtKB-SubCell"/>
</dbReference>
<dbReference type="GO" id="GO:0003677">
    <property type="term" value="F:DNA binding"/>
    <property type="evidence" value="ECO:0007669"/>
    <property type="project" value="UniProtKB-UniRule"/>
</dbReference>
<dbReference type="GO" id="GO:0016987">
    <property type="term" value="F:sigma factor activity"/>
    <property type="evidence" value="ECO:0007669"/>
    <property type="project" value="UniProtKB-UniRule"/>
</dbReference>
<dbReference type="GO" id="GO:0006352">
    <property type="term" value="P:DNA-templated transcription initiation"/>
    <property type="evidence" value="ECO:0007669"/>
    <property type="project" value="UniProtKB-UniRule"/>
</dbReference>
<dbReference type="CDD" id="cd06171">
    <property type="entry name" value="Sigma70_r4"/>
    <property type="match status" value="1"/>
</dbReference>
<dbReference type="FunFam" id="1.10.601.10:FF:000001">
    <property type="entry name" value="RNA polymerase sigma factor SigA"/>
    <property type="match status" value="1"/>
</dbReference>
<dbReference type="Gene3D" id="1.10.601.10">
    <property type="entry name" value="RNA Polymerase Primary Sigma Factor"/>
    <property type="match status" value="1"/>
</dbReference>
<dbReference type="Gene3D" id="1.10.220.120">
    <property type="entry name" value="Sigma-70 factor, region 1.1"/>
    <property type="match status" value="1"/>
</dbReference>
<dbReference type="Gene3D" id="1.10.10.10">
    <property type="entry name" value="Winged helix-like DNA-binding domain superfamily/Winged helix DNA-binding domain"/>
    <property type="match status" value="2"/>
</dbReference>
<dbReference type="HAMAP" id="MF_00963">
    <property type="entry name" value="Sigma70_RpoD_SigA"/>
    <property type="match status" value="1"/>
</dbReference>
<dbReference type="InterPro" id="IPR014284">
    <property type="entry name" value="RNA_pol_sigma-70_dom"/>
</dbReference>
<dbReference type="InterPro" id="IPR000943">
    <property type="entry name" value="RNA_pol_sigma70"/>
</dbReference>
<dbReference type="InterPro" id="IPR009042">
    <property type="entry name" value="RNA_pol_sigma70_r1_2"/>
</dbReference>
<dbReference type="InterPro" id="IPR007627">
    <property type="entry name" value="RNA_pol_sigma70_r2"/>
</dbReference>
<dbReference type="InterPro" id="IPR007624">
    <property type="entry name" value="RNA_pol_sigma70_r3"/>
</dbReference>
<dbReference type="InterPro" id="IPR007630">
    <property type="entry name" value="RNA_pol_sigma70_r4"/>
</dbReference>
<dbReference type="InterPro" id="IPR007631">
    <property type="entry name" value="RNA_pol_sigma_70_non-ess"/>
</dbReference>
<dbReference type="InterPro" id="IPR007127">
    <property type="entry name" value="RNA_pol_sigma_70_r1_1"/>
</dbReference>
<dbReference type="InterPro" id="IPR042189">
    <property type="entry name" value="RNA_pol_sigma_70_r1_1_sf"/>
</dbReference>
<dbReference type="InterPro" id="IPR013325">
    <property type="entry name" value="RNA_pol_sigma_r2"/>
</dbReference>
<dbReference type="InterPro" id="IPR013324">
    <property type="entry name" value="RNA_pol_sigma_r3/r4-like"/>
</dbReference>
<dbReference type="InterPro" id="IPR012760">
    <property type="entry name" value="RNA_pol_sigma_RpoD_C"/>
</dbReference>
<dbReference type="InterPro" id="IPR050239">
    <property type="entry name" value="Sigma-70_RNA_pol_init_factors"/>
</dbReference>
<dbReference type="InterPro" id="IPR028630">
    <property type="entry name" value="Sigma70_RpoD"/>
</dbReference>
<dbReference type="InterPro" id="IPR036388">
    <property type="entry name" value="WH-like_DNA-bd_sf"/>
</dbReference>
<dbReference type="NCBIfam" id="NF004208">
    <property type="entry name" value="PRK05658.1"/>
    <property type="match status" value="1"/>
</dbReference>
<dbReference type="NCBIfam" id="TIGR02393">
    <property type="entry name" value="RpoD_Cterm"/>
    <property type="match status" value="1"/>
</dbReference>
<dbReference type="NCBIfam" id="TIGR02937">
    <property type="entry name" value="sigma70-ECF"/>
    <property type="match status" value="1"/>
</dbReference>
<dbReference type="PANTHER" id="PTHR30603">
    <property type="entry name" value="RNA POLYMERASE SIGMA FACTOR RPO"/>
    <property type="match status" value="1"/>
</dbReference>
<dbReference type="PANTHER" id="PTHR30603:SF60">
    <property type="entry name" value="RNA POLYMERASE SIGMA FACTOR RPOD"/>
    <property type="match status" value="1"/>
</dbReference>
<dbReference type="Pfam" id="PF04546">
    <property type="entry name" value="Sigma70_ner"/>
    <property type="match status" value="1"/>
</dbReference>
<dbReference type="Pfam" id="PF03979">
    <property type="entry name" value="Sigma70_r1_1"/>
    <property type="match status" value="1"/>
</dbReference>
<dbReference type="Pfam" id="PF00140">
    <property type="entry name" value="Sigma70_r1_2"/>
    <property type="match status" value="1"/>
</dbReference>
<dbReference type="Pfam" id="PF04542">
    <property type="entry name" value="Sigma70_r2"/>
    <property type="match status" value="1"/>
</dbReference>
<dbReference type="Pfam" id="PF04539">
    <property type="entry name" value="Sigma70_r3"/>
    <property type="match status" value="1"/>
</dbReference>
<dbReference type="Pfam" id="PF04545">
    <property type="entry name" value="Sigma70_r4"/>
    <property type="match status" value="1"/>
</dbReference>
<dbReference type="PRINTS" id="PR00046">
    <property type="entry name" value="SIGMA70FCT"/>
</dbReference>
<dbReference type="SUPFAM" id="SSF88946">
    <property type="entry name" value="Sigma2 domain of RNA polymerase sigma factors"/>
    <property type="match status" value="1"/>
</dbReference>
<dbReference type="SUPFAM" id="SSF88659">
    <property type="entry name" value="Sigma3 and sigma4 domains of RNA polymerase sigma factors"/>
    <property type="match status" value="2"/>
</dbReference>
<dbReference type="PROSITE" id="PS00715">
    <property type="entry name" value="SIGMA70_1"/>
    <property type="match status" value="1"/>
</dbReference>
<dbReference type="PROSITE" id="PS00716">
    <property type="entry name" value="SIGMA70_2"/>
    <property type="match status" value="1"/>
</dbReference>
<keyword id="KW-0963">Cytoplasm</keyword>
<keyword id="KW-0238">DNA-binding</keyword>
<keyword id="KW-0731">Sigma factor</keyword>
<keyword id="KW-0804">Transcription</keyword>
<keyword id="KW-0805">Transcription regulation</keyword>
<proteinExistence type="inferred from homology"/>
<evidence type="ECO:0000255" key="1">
    <source>
        <dbReference type="HAMAP-Rule" id="MF_00963"/>
    </source>
</evidence>
<evidence type="ECO:0000256" key="2">
    <source>
        <dbReference type="SAM" id="MobiDB-lite"/>
    </source>
</evidence>
<accession>Q92FZ8</accession>
<gene>
    <name evidence="1" type="primary">rpoD</name>
    <name type="ordered locus">RC1329</name>
</gene>
<feature type="chain" id="PRO_0000093910" description="RNA polymerase sigma factor RpoD">
    <location>
        <begin position="1"/>
        <end position="634"/>
    </location>
</feature>
<feature type="DNA-binding region" description="H-T-H motif" evidence="1">
    <location>
        <begin position="580"/>
        <end position="599"/>
    </location>
</feature>
<feature type="region of interest" description="Disordered" evidence="2">
    <location>
        <begin position="177"/>
        <end position="202"/>
    </location>
</feature>
<feature type="region of interest" description="Sigma-70 factor domain-2" evidence="1">
    <location>
        <begin position="385"/>
        <end position="455"/>
    </location>
</feature>
<feature type="region of interest" description="Sigma-70 factor domain-3" evidence="1">
    <location>
        <begin position="464"/>
        <end position="541"/>
    </location>
</feature>
<feature type="region of interest" description="Sigma-70 factor domain-4" evidence="1">
    <location>
        <begin position="554"/>
        <end position="607"/>
    </location>
</feature>
<feature type="region of interest" description="Disordered" evidence="2">
    <location>
        <begin position="608"/>
        <end position="634"/>
    </location>
</feature>
<feature type="short sequence motif" description="Interaction with polymerase core subunit RpoC">
    <location>
        <begin position="409"/>
        <end position="412"/>
    </location>
</feature>
<feature type="compositionally biased region" description="Acidic residues" evidence="2">
    <location>
        <begin position="182"/>
        <end position="197"/>
    </location>
</feature>
<sequence length="634" mass="72831">MSNSNIDNDLDKIDSLLKKAKSKKIPVTYDDINNALPLNKNPSIRQLEEAILKFSDAGVDILESNEDDEIKLDIGMDEEFKLSTNVDNEPEDEVEEENIGTTDDPVRLYLKDMGGVDLLTREHEVEIAKRIEEGHKTMIASLCRSPIAMRCFIVWYEDLVNEKMLLRDLIDLEANMLHDETPENDEENSSETEGEEHEDNHLSMSRVETQILPNIIERMKKIAFICEELLIEAKKCYEKSFEPKVLQNSKKYNNLELLINEVSEIHFNSKRTEEILGKMYGINRDLINKETAFLKLAEKYGVTRQNFLDEYIGSVINAAWKEKMLKNKKVAWKELMTKESDYIDQMIAELSVIESKTGLLVNDFKKLVNTIQKSERQTLQAKKDMIEANLRLVISIAKKYANRGLQFLDLIQEGNIGLMKAVDKFEYRRGYKFSTYATWWIRQAITRAIADQARTIRIPVHMIETINKILRTSRQMLNELGYEPTATEIANRLSMPLDKVRKVMKIAKEPISLENPVGDDSDGGQLGDFIEDKNAVAPIDAAIQSNLREVTTRVLATLTPREERVLRMRFGIGMNTDHTLEEVGQQFKVTRERIRQIESKALRKLQHPIRSKKLNSFRSGGKRGDGNSSDLLEA</sequence>